<dbReference type="EMBL" id="AP008934">
    <property type="protein sequence ID" value="BAE17686.1"/>
    <property type="molecule type" value="Genomic_DNA"/>
</dbReference>
<dbReference type="RefSeq" id="WP_002482492.1">
    <property type="nucleotide sequence ID" value="NZ_MTGA01000036.1"/>
</dbReference>
<dbReference type="SMR" id="Q49ZT8"/>
<dbReference type="KEGG" id="ssp:SSP0541"/>
<dbReference type="PATRIC" id="fig|342451.11.peg.545"/>
<dbReference type="eggNOG" id="COG0745">
    <property type="taxonomic scope" value="Bacteria"/>
</dbReference>
<dbReference type="HOGENOM" id="CLU_000445_30_3_9"/>
<dbReference type="OrthoDB" id="9790442at2"/>
<dbReference type="Proteomes" id="UP000006371">
    <property type="component" value="Chromosome"/>
</dbReference>
<dbReference type="GO" id="GO:0005829">
    <property type="term" value="C:cytosol"/>
    <property type="evidence" value="ECO:0007669"/>
    <property type="project" value="TreeGrafter"/>
</dbReference>
<dbReference type="GO" id="GO:0032993">
    <property type="term" value="C:protein-DNA complex"/>
    <property type="evidence" value="ECO:0007669"/>
    <property type="project" value="TreeGrafter"/>
</dbReference>
<dbReference type="GO" id="GO:0000156">
    <property type="term" value="F:phosphorelay response regulator activity"/>
    <property type="evidence" value="ECO:0007669"/>
    <property type="project" value="TreeGrafter"/>
</dbReference>
<dbReference type="GO" id="GO:0000976">
    <property type="term" value="F:transcription cis-regulatory region binding"/>
    <property type="evidence" value="ECO:0007669"/>
    <property type="project" value="TreeGrafter"/>
</dbReference>
<dbReference type="GO" id="GO:0006355">
    <property type="term" value="P:regulation of DNA-templated transcription"/>
    <property type="evidence" value="ECO:0007669"/>
    <property type="project" value="InterPro"/>
</dbReference>
<dbReference type="CDD" id="cd17574">
    <property type="entry name" value="REC_OmpR"/>
    <property type="match status" value="1"/>
</dbReference>
<dbReference type="CDD" id="cd00383">
    <property type="entry name" value="trans_reg_C"/>
    <property type="match status" value="1"/>
</dbReference>
<dbReference type="FunFam" id="1.10.10.10:FF:000018">
    <property type="entry name" value="DNA-binding response regulator ResD"/>
    <property type="match status" value="1"/>
</dbReference>
<dbReference type="Gene3D" id="3.40.50.2300">
    <property type="match status" value="1"/>
</dbReference>
<dbReference type="Gene3D" id="1.10.10.10">
    <property type="entry name" value="Winged helix-like DNA-binding domain superfamily/Winged helix DNA-binding domain"/>
    <property type="match status" value="1"/>
</dbReference>
<dbReference type="InterPro" id="IPR011006">
    <property type="entry name" value="CheY-like_superfamily"/>
</dbReference>
<dbReference type="InterPro" id="IPR001867">
    <property type="entry name" value="OmpR/PhoB-type_DNA-bd"/>
</dbReference>
<dbReference type="InterPro" id="IPR001789">
    <property type="entry name" value="Sig_transdc_resp-reg_receiver"/>
</dbReference>
<dbReference type="InterPro" id="IPR039420">
    <property type="entry name" value="WalR-like"/>
</dbReference>
<dbReference type="InterPro" id="IPR036388">
    <property type="entry name" value="WH-like_DNA-bd_sf"/>
</dbReference>
<dbReference type="PANTHER" id="PTHR48111:SF49">
    <property type="entry name" value="HEME RESPONSE REGULATOR HSSR"/>
    <property type="match status" value="1"/>
</dbReference>
<dbReference type="PANTHER" id="PTHR48111">
    <property type="entry name" value="REGULATOR OF RPOS"/>
    <property type="match status" value="1"/>
</dbReference>
<dbReference type="Pfam" id="PF00072">
    <property type="entry name" value="Response_reg"/>
    <property type="match status" value="1"/>
</dbReference>
<dbReference type="Pfam" id="PF00486">
    <property type="entry name" value="Trans_reg_C"/>
    <property type="match status" value="1"/>
</dbReference>
<dbReference type="SMART" id="SM00448">
    <property type="entry name" value="REC"/>
    <property type="match status" value="1"/>
</dbReference>
<dbReference type="SMART" id="SM00862">
    <property type="entry name" value="Trans_reg_C"/>
    <property type="match status" value="1"/>
</dbReference>
<dbReference type="SUPFAM" id="SSF52172">
    <property type="entry name" value="CheY-like"/>
    <property type="match status" value="1"/>
</dbReference>
<dbReference type="PROSITE" id="PS51755">
    <property type="entry name" value="OMPR_PHOB"/>
    <property type="match status" value="1"/>
</dbReference>
<dbReference type="PROSITE" id="PS50110">
    <property type="entry name" value="RESPONSE_REGULATORY"/>
    <property type="match status" value="1"/>
</dbReference>
<proteinExistence type="inferred from homology"/>
<reference key="1">
    <citation type="journal article" date="2005" name="Proc. Natl. Acad. Sci. U.S.A.">
        <title>Whole genome sequence of Staphylococcus saprophyticus reveals the pathogenesis of uncomplicated urinary tract infection.</title>
        <authorList>
            <person name="Kuroda M."/>
            <person name="Yamashita A."/>
            <person name="Hirakawa H."/>
            <person name="Kumano M."/>
            <person name="Morikawa K."/>
            <person name="Higashide M."/>
            <person name="Maruyama A."/>
            <person name="Inose Y."/>
            <person name="Matoba K."/>
            <person name="Toh H."/>
            <person name="Kuhara S."/>
            <person name="Hattori M."/>
            <person name="Ohta T."/>
        </authorList>
    </citation>
    <scope>NUCLEOTIDE SEQUENCE [LARGE SCALE GENOMIC DNA]</scope>
    <source>
        <strain>ATCC 15305 / DSM 20229 / NCIMB 8711 / NCTC 7292 / S-41</strain>
    </source>
</reference>
<accession>Q49ZT8</accession>
<protein>
    <recommendedName>
        <fullName>Heme response regulator HssR</fullName>
    </recommendedName>
</protein>
<organism>
    <name type="scientific">Staphylococcus saprophyticus subsp. saprophyticus (strain ATCC 15305 / DSM 20229 / NCIMB 8711 / NCTC 7292 / S-41)</name>
    <dbReference type="NCBI Taxonomy" id="342451"/>
    <lineage>
        <taxon>Bacteria</taxon>
        <taxon>Bacillati</taxon>
        <taxon>Bacillota</taxon>
        <taxon>Bacilli</taxon>
        <taxon>Bacillales</taxon>
        <taxon>Staphylococcaceae</taxon>
        <taxon>Staphylococcus</taxon>
    </lineage>
</organism>
<feature type="chain" id="PRO_0000331336" description="Heme response regulator HssR">
    <location>
        <begin position="1"/>
        <end position="224"/>
    </location>
</feature>
<feature type="domain" description="Response regulatory" evidence="2">
    <location>
        <begin position="3"/>
        <end position="116"/>
    </location>
</feature>
<feature type="DNA-binding region" description="OmpR/PhoB-type" evidence="3">
    <location>
        <begin position="124"/>
        <end position="222"/>
    </location>
</feature>
<feature type="modified residue" description="4-aspartylphosphate" evidence="2">
    <location>
        <position position="52"/>
    </location>
</feature>
<name>HSSR_STAS1</name>
<evidence type="ECO:0000250" key="1"/>
<evidence type="ECO:0000255" key="2">
    <source>
        <dbReference type="PROSITE-ProRule" id="PRU00169"/>
    </source>
</evidence>
<evidence type="ECO:0000255" key="3">
    <source>
        <dbReference type="PROSITE-ProRule" id="PRU01091"/>
    </source>
</evidence>
<evidence type="ECO:0000305" key="4"/>
<gene>
    <name type="primary">hssR</name>
    <name type="ordered locus">SSP0541</name>
</gene>
<keyword id="KW-0010">Activator</keyword>
<keyword id="KW-0963">Cytoplasm</keyword>
<keyword id="KW-0238">DNA-binding</keyword>
<keyword id="KW-0597">Phosphoprotein</keyword>
<keyword id="KW-1185">Reference proteome</keyword>
<keyword id="KW-0804">Transcription</keyword>
<keyword id="KW-0805">Transcription regulation</keyword>
<keyword id="KW-0902">Two-component regulatory system</keyword>
<keyword id="KW-0843">Virulence</keyword>
<comment type="function">
    <text evidence="1">Member of the two-component regulatory system HssS/HssR involved in intracellular heme homeostasis and tempering of staphylococcal virulence. Phosphorylated HssR binds to a direct repeat sequence within hrtAB promoter and activates the expression of hrtAB, an efflux pump, in response to extracellular heme, hemin, hemoglobin or blood (By similarity).</text>
</comment>
<comment type="subcellular location">
    <subcellularLocation>
        <location evidence="4">Cytoplasm</location>
    </subcellularLocation>
</comment>
<comment type="PTM">
    <text evidence="1">Phosphorylated by HssS.</text>
</comment>
<sequence length="224" mass="25861">MTTCLIVDDDPKILEYVSKYIEREHFETIVQSSAENALSYLETHQVDIAIVDVMMGKMSGFELCKILKEDFDIPVIMLTARDALSDKEQAYLTGTDDYVTKPFEVKELMFRIKAVLKRYNVNINNEVSIGNLTLNQSYLEIQSSSKSMNLPNKEFQLLFLLASNPRQVFNRDALIEKIWGFDYEGDERTVDVHIKRLRKRLEKIDASVTIHTVRGLGYKVDDHV</sequence>